<proteinExistence type="evidence at protein level"/>
<protein>
    <recommendedName>
        <fullName evidence="5">Norreticuline-7-O-methyltransferase</fullName>
        <ecNumber evidence="6">2.1.1.-</ecNumber>
    </recommendedName>
</protein>
<reference key="1">
    <citation type="journal article" date="2009" name="Plant J.">
        <title>Functional characterization of a novel benzylisoquinoline O-methyltransferase suggests its involvement in papaverine biosynthesis in opium poppy (Papaver somniferum L).</title>
        <authorList>
            <person name="Pienkny S."/>
            <person name="Brandt W."/>
            <person name="Schmidt J."/>
            <person name="Kramell R."/>
            <person name="Ziegler J."/>
        </authorList>
    </citation>
    <scope>NUCLEOTIDE SEQUENCE [MRNA]</scope>
    <scope>FUNCTION</scope>
    <scope>TISSUE SPECIFICITY</scope>
    <scope>BIOPHYSICOCHEMICAL PROPERTIES</scope>
</reference>
<reference key="2">
    <citation type="journal article" date="2012" name="Plant J.">
        <title>Systematic silencing of benzylisoquinoline alkaloid biosynthetic genes reveals the major route to papaverine in opium poppy.</title>
        <authorList>
            <person name="Desgagne-Penix I."/>
            <person name="Facchini P.J."/>
        </authorList>
    </citation>
    <scope>FUNCTION</scope>
</reference>
<reference key="3">
    <citation type="journal article" date="2013" name="PLoS ONE">
        <title>Comparative transcriptome analysis using high papaverine mutant of Papaver somniferum reveals pathway and uncharacterized steps of papaverine biosynthesis.</title>
        <authorList>
            <person name="Pathak S."/>
            <person name="Lakhwani D."/>
            <person name="Gupta P."/>
            <person name="Mishra B.K."/>
            <person name="Shukla S."/>
            <person name="Asif M.H."/>
            <person name="Trivedi P.K."/>
        </authorList>
    </citation>
    <scope>FUNCTION</scope>
</reference>
<dbReference type="EC" id="2.1.1.-" evidence="6"/>
<dbReference type="EMBL" id="FJ156103">
    <property type="protein sequence ID" value="ACN88562.1"/>
    <property type="molecule type" value="Genomic_DNA"/>
</dbReference>
<dbReference type="RefSeq" id="XP_026431254.1">
    <property type="nucleotide sequence ID" value="XM_026575469.1"/>
</dbReference>
<dbReference type="SMR" id="C7SDN9"/>
<dbReference type="GeneID" id="113328355"/>
<dbReference type="KEGG" id="ag:ACN88562"/>
<dbReference type="OrthoDB" id="1606438at2759"/>
<dbReference type="BioCyc" id="MetaCyc:MONOMER-18210"/>
<dbReference type="GO" id="GO:0008171">
    <property type="term" value="F:O-methyltransferase activity"/>
    <property type="evidence" value="ECO:0007669"/>
    <property type="project" value="InterPro"/>
</dbReference>
<dbReference type="GO" id="GO:0046983">
    <property type="term" value="F:protein dimerization activity"/>
    <property type="evidence" value="ECO:0007669"/>
    <property type="project" value="InterPro"/>
</dbReference>
<dbReference type="GO" id="GO:0009820">
    <property type="term" value="P:alkaloid metabolic process"/>
    <property type="evidence" value="ECO:0007669"/>
    <property type="project" value="UniProtKB-KW"/>
</dbReference>
<dbReference type="GO" id="GO:0032259">
    <property type="term" value="P:methylation"/>
    <property type="evidence" value="ECO:0007669"/>
    <property type="project" value="UniProtKB-KW"/>
</dbReference>
<dbReference type="CDD" id="cd02440">
    <property type="entry name" value="AdoMet_MTases"/>
    <property type="match status" value="1"/>
</dbReference>
<dbReference type="Gene3D" id="3.40.50.150">
    <property type="entry name" value="Vaccinia Virus protein VP39"/>
    <property type="match status" value="1"/>
</dbReference>
<dbReference type="Gene3D" id="1.10.10.10">
    <property type="entry name" value="Winged helix-like DNA-binding domain superfamily/Winged helix DNA-binding domain"/>
    <property type="match status" value="1"/>
</dbReference>
<dbReference type="InterPro" id="IPR016461">
    <property type="entry name" value="COMT-like"/>
</dbReference>
<dbReference type="InterPro" id="IPR001077">
    <property type="entry name" value="O_MeTrfase_dom"/>
</dbReference>
<dbReference type="InterPro" id="IPR012967">
    <property type="entry name" value="Plant_O-MeTrfase_dimerisation"/>
</dbReference>
<dbReference type="InterPro" id="IPR029063">
    <property type="entry name" value="SAM-dependent_MTases_sf"/>
</dbReference>
<dbReference type="InterPro" id="IPR036388">
    <property type="entry name" value="WH-like_DNA-bd_sf"/>
</dbReference>
<dbReference type="InterPro" id="IPR036390">
    <property type="entry name" value="WH_DNA-bd_sf"/>
</dbReference>
<dbReference type="PANTHER" id="PTHR11746">
    <property type="entry name" value="O-METHYLTRANSFERASE"/>
    <property type="match status" value="1"/>
</dbReference>
<dbReference type="Pfam" id="PF08100">
    <property type="entry name" value="Dimerisation"/>
    <property type="match status" value="1"/>
</dbReference>
<dbReference type="Pfam" id="PF00891">
    <property type="entry name" value="Methyltransf_2"/>
    <property type="match status" value="1"/>
</dbReference>
<dbReference type="PIRSF" id="PIRSF005739">
    <property type="entry name" value="O-mtase"/>
    <property type="match status" value="1"/>
</dbReference>
<dbReference type="SUPFAM" id="SSF53335">
    <property type="entry name" value="S-adenosyl-L-methionine-dependent methyltransferases"/>
    <property type="match status" value="1"/>
</dbReference>
<dbReference type="SUPFAM" id="SSF46785">
    <property type="entry name" value="Winged helix' DNA-binding domain"/>
    <property type="match status" value="1"/>
</dbReference>
<dbReference type="PROSITE" id="PS51683">
    <property type="entry name" value="SAM_OMT_II"/>
    <property type="match status" value="1"/>
</dbReference>
<name>N7OMT_PAPSO</name>
<accession>C7SDN9</accession>
<sequence>MEVVSQIDQENQAIIWKQIYGFSESLLLKCAVQCEIAETIHNHGTPMSILELAAKLPIDQPVNIDRLYRVMRYLVHQKLFNKEVISTLNGGTVQVTEKYWLAPPAKYLIRGSQQSMVPSVLGIIDEDMFAPWHILKDSLTGECNIFETALGKSISVYMSENPEMNQISNGAMAFDSGLVTSHLVNECKSVFGDEIKTLVDVGGGTGTALRAISKAFPNIKCTLFDLPHVIADSPEIPTITKVSGDMFKSIPSADAIFMKNILHDWNDDECIQILKRCKDVVSAGGKLIMVEMVLDEDSFHPYSKLRLTSDIDMMVNNGGKERTEKEWEKLFDAAGFASCKFTQMSVGFAAQSIIEVY</sequence>
<evidence type="ECO:0000255" key="1">
    <source>
        <dbReference type="PROSITE-ProRule" id="PRU01020"/>
    </source>
</evidence>
<evidence type="ECO:0000269" key="2">
    <source>
    </source>
</evidence>
<evidence type="ECO:0000269" key="3">
    <source>
    </source>
</evidence>
<evidence type="ECO:0000269" key="4">
    <source>
    </source>
</evidence>
<evidence type="ECO:0000303" key="5">
    <source>
    </source>
</evidence>
<evidence type="ECO:0000305" key="6"/>
<evidence type="ECO:0000312" key="7">
    <source>
        <dbReference type="EMBL" id="ACN88562.1"/>
    </source>
</evidence>
<comment type="function">
    <text evidence="2 3 4">Involved in the biosynthesis of benzylisoquinoline alkaloids (PubMed:19500305). Catalyzes specifically the methylation of norreticuline at position seven to produce norlaudanine (PubMed:19500305). No activity with norcoclaurine, reticuline, norlaudanosoline, norisoorientaline, scoulerine, salutaridinol, oripavine, salsolinol, codeine or morphine (PubMed:19500305). Involved in papaverine biosynthesis (PubMed:22725256, PubMed:23738019).</text>
</comment>
<comment type="biophysicochemical properties">
    <kinetics>
        <KM evidence="2">44 uM for norreticuline</KM>
        <KM evidence="2">19 uM for S-adenosyl-L-methionine</KM>
        <text evidence="2">kcat is 0.074 sec(-1) for norreticuline.</text>
    </kinetics>
    <phDependence>
        <text evidence="2">Optimum pH is between 7.0 and 9.5.</text>
    </phDependence>
    <temperatureDependence>
        <text evidence="2">Optimum temperature is 35 degrees Celsius.</text>
    </temperatureDependence>
</comment>
<comment type="tissue specificity">
    <text evidence="2">Expressed instems, leaves, roots and seedlings.</text>
</comment>
<comment type="similarity">
    <text evidence="1">Belongs to the class I-like SAM-binding methyltransferase superfamily. Cation-independent O-methyltransferase family.</text>
</comment>
<keyword id="KW-0017">Alkaloid metabolism</keyword>
<keyword id="KW-0489">Methyltransferase</keyword>
<keyword id="KW-0949">S-adenosyl-L-methionine</keyword>
<keyword id="KW-0808">Transferase</keyword>
<organism evidence="7">
    <name type="scientific">Papaver somniferum</name>
    <name type="common">Opium poppy</name>
    <dbReference type="NCBI Taxonomy" id="3469"/>
    <lineage>
        <taxon>Eukaryota</taxon>
        <taxon>Viridiplantae</taxon>
        <taxon>Streptophyta</taxon>
        <taxon>Embryophyta</taxon>
        <taxon>Tracheophyta</taxon>
        <taxon>Spermatophyta</taxon>
        <taxon>Magnoliopsida</taxon>
        <taxon>Ranunculales</taxon>
        <taxon>Papaveraceae</taxon>
        <taxon>Papaveroideae</taxon>
        <taxon>Papaver</taxon>
    </lineage>
</organism>
<feature type="chain" id="PRO_0000433986" description="Norreticuline-7-O-methyltransferase">
    <location>
        <begin position="1"/>
        <end position="357"/>
    </location>
</feature>
<feature type="active site" description="Proton acceptor" evidence="1">
    <location>
        <position position="263"/>
    </location>
</feature>
<feature type="binding site" evidence="1">
    <location>
        <position position="225"/>
    </location>
    <ligand>
        <name>S-adenosyl-L-methionine</name>
        <dbReference type="ChEBI" id="CHEBI:59789"/>
    </ligand>
</feature>